<organism>
    <name type="scientific">Rattus norvegicus</name>
    <name type="common">Rat</name>
    <dbReference type="NCBI Taxonomy" id="10116"/>
    <lineage>
        <taxon>Eukaryota</taxon>
        <taxon>Metazoa</taxon>
        <taxon>Chordata</taxon>
        <taxon>Craniata</taxon>
        <taxon>Vertebrata</taxon>
        <taxon>Euteleostomi</taxon>
        <taxon>Mammalia</taxon>
        <taxon>Eutheria</taxon>
        <taxon>Euarchontoglires</taxon>
        <taxon>Glires</taxon>
        <taxon>Rodentia</taxon>
        <taxon>Myomorpha</taxon>
        <taxon>Muroidea</taxon>
        <taxon>Muridae</taxon>
        <taxon>Murinae</taxon>
        <taxon>Rattus</taxon>
    </lineage>
</organism>
<dbReference type="EMBL" id="BC063182">
    <property type="protein sequence ID" value="AAH63182.1"/>
    <property type="molecule type" value="mRNA"/>
</dbReference>
<dbReference type="RefSeq" id="NP_001013245.1">
    <property type="nucleotide sequence ID" value="NM_001013227.2"/>
</dbReference>
<dbReference type="SMR" id="Q6P4Z9"/>
<dbReference type="FunCoup" id="Q6P4Z9">
    <property type="interactions" value="3293"/>
</dbReference>
<dbReference type="IntAct" id="Q6P4Z9">
    <property type="interactions" value="1"/>
</dbReference>
<dbReference type="STRING" id="10116.ENSRNOP00000026581"/>
<dbReference type="iPTMnet" id="Q6P4Z9"/>
<dbReference type="PhosphoSitePlus" id="Q6P4Z9"/>
<dbReference type="jPOST" id="Q6P4Z9"/>
<dbReference type="PaxDb" id="10116-ENSRNOP00000026581"/>
<dbReference type="DNASU" id="363283"/>
<dbReference type="Ensembl" id="ENSRNOT00000106176.1">
    <property type="protein sequence ID" value="ENSRNOP00000095164.1"/>
    <property type="gene ID" value="ENSRNOG00000019635.7"/>
</dbReference>
<dbReference type="GeneID" id="363283"/>
<dbReference type="KEGG" id="rno:363283"/>
<dbReference type="UCSC" id="RGD:1311404">
    <property type="organism name" value="rat"/>
</dbReference>
<dbReference type="AGR" id="RGD:1311404"/>
<dbReference type="CTD" id="10920"/>
<dbReference type="RGD" id="1311404">
    <property type="gene designation" value="Cops8"/>
</dbReference>
<dbReference type="eggNOG" id="KOG4414">
    <property type="taxonomic scope" value="Eukaryota"/>
</dbReference>
<dbReference type="GeneTree" id="ENSGT00390000000977"/>
<dbReference type="HOGENOM" id="CLU_098091_1_1_1"/>
<dbReference type="InParanoid" id="Q6P4Z9"/>
<dbReference type="OMA" id="MRIPDKL"/>
<dbReference type="OrthoDB" id="5351233at2759"/>
<dbReference type="PhylomeDB" id="Q6P4Z9"/>
<dbReference type="Reactome" id="R-RNO-5696394">
    <property type="pathway name" value="DNA Damage Recognition in GG-NER"/>
</dbReference>
<dbReference type="Reactome" id="R-RNO-6781823">
    <property type="pathway name" value="Formation of TC-NER Pre-Incision Complex"/>
</dbReference>
<dbReference type="Reactome" id="R-RNO-8856825">
    <property type="pathway name" value="Cargo recognition for clathrin-mediated endocytosis"/>
</dbReference>
<dbReference type="Reactome" id="R-RNO-8951664">
    <property type="pathway name" value="Neddylation"/>
</dbReference>
<dbReference type="PRO" id="PR:Q6P4Z9"/>
<dbReference type="Proteomes" id="UP000002494">
    <property type="component" value="Chromosome 9"/>
</dbReference>
<dbReference type="Bgee" id="ENSRNOG00000019635">
    <property type="expression patterns" value="Expressed in quadriceps femoris and 19 other cell types or tissues"/>
</dbReference>
<dbReference type="GO" id="GO:0008180">
    <property type="term" value="C:COP9 signalosome"/>
    <property type="evidence" value="ECO:0000266"/>
    <property type="project" value="RGD"/>
</dbReference>
<dbReference type="GO" id="GO:0005737">
    <property type="term" value="C:cytoplasm"/>
    <property type="evidence" value="ECO:0000266"/>
    <property type="project" value="RGD"/>
</dbReference>
<dbReference type="GO" id="GO:0005829">
    <property type="term" value="C:cytosol"/>
    <property type="evidence" value="ECO:0007669"/>
    <property type="project" value="Ensembl"/>
</dbReference>
<dbReference type="GO" id="GO:0005654">
    <property type="term" value="C:nucleoplasm"/>
    <property type="evidence" value="ECO:0007669"/>
    <property type="project" value="Ensembl"/>
</dbReference>
<dbReference type="GO" id="GO:0005634">
    <property type="term" value="C:nucleus"/>
    <property type="evidence" value="ECO:0000266"/>
    <property type="project" value="RGD"/>
</dbReference>
<dbReference type="GO" id="GO:0048471">
    <property type="term" value="C:perinuclear region of cytoplasm"/>
    <property type="evidence" value="ECO:0000266"/>
    <property type="project" value="RGD"/>
</dbReference>
<dbReference type="GO" id="GO:0010387">
    <property type="term" value="P:COP9 signalosome assembly"/>
    <property type="evidence" value="ECO:0007669"/>
    <property type="project" value="InterPro"/>
</dbReference>
<dbReference type="GO" id="GO:0008285">
    <property type="term" value="P:negative regulation of cell population proliferation"/>
    <property type="evidence" value="ECO:0000266"/>
    <property type="project" value="RGD"/>
</dbReference>
<dbReference type="GO" id="GO:0000338">
    <property type="term" value="P:protein deneddylation"/>
    <property type="evidence" value="ECO:0000266"/>
    <property type="project" value="RGD"/>
</dbReference>
<dbReference type="FunFam" id="1.25.40.990:FF:000011">
    <property type="entry name" value="COP9 signalosome complex subunit 8-like Protein"/>
    <property type="match status" value="1"/>
</dbReference>
<dbReference type="Gene3D" id="1.25.40.990">
    <property type="match status" value="1"/>
</dbReference>
<dbReference type="InterPro" id="IPR033205">
    <property type="entry name" value="COP9_CSN8"/>
</dbReference>
<dbReference type="InterPro" id="IPR033464">
    <property type="entry name" value="CSN8_PSD8_EIF3K"/>
</dbReference>
<dbReference type="InterPro" id="IPR000717">
    <property type="entry name" value="PCI_dom"/>
</dbReference>
<dbReference type="PANTHER" id="PTHR13339">
    <property type="entry name" value="COP9 SIGNALOSOME COMPLEX SUBUNIT 8"/>
    <property type="match status" value="1"/>
</dbReference>
<dbReference type="PANTHER" id="PTHR13339:SF0">
    <property type="entry name" value="COP9 SIGNALOSOME COMPLEX SUBUNIT 8"/>
    <property type="match status" value="1"/>
</dbReference>
<dbReference type="Pfam" id="PF10075">
    <property type="entry name" value="CSN8_PSD8_EIF3K"/>
    <property type="match status" value="1"/>
</dbReference>
<dbReference type="PROSITE" id="PS50250">
    <property type="entry name" value="PCI"/>
    <property type="match status" value="1"/>
</dbReference>
<comment type="function">
    <text evidence="1">Component of the COP9 signalosome complex (CSN), a complex involved in various cellular and developmental processes. The CSN complex is an essential regulator of the ubiquitin (Ubl) conjugation pathway by mediating the deneddylation of the cullin subunits of SCF-type E3 ligase complexes, leading to decrease the Ubl ligase activity of SCF-type complexes such as SCF, CSA or DDB2. The complex is also involved in phosphorylation of p53/TP53, c-jun/JUN, IkappaBalpha/NFKBIA, ITPK1 and IRF8/ICSBP, possibly via its association with CK2 and PKD kinases. CSN-dependent phosphorylation of TP53 and JUN promotes and protects degradation by the Ubl system, respectively (By similarity).</text>
</comment>
<comment type="subunit">
    <text evidence="2">Component of the CSN complex, composed of COPS1/GPS1, COPS2, COPS3, COPS4, COPS5, COPS6, COPS7 (COPS7A or COPS7B), COPS8 and COPS9. In the complex, it probably interacts directly with COPS3, COPS4 and COPS7 (COPS7A or COPS7B).</text>
</comment>
<comment type="subcellular location">
    <subcellularLocation>
        <location evidence="1">Cytoplasm</location>
    </subcellularLocation>
    <subcellularLocation>
        <location evidence="1">Nucleus</location>
    </subcellularLocation>
</comment>
<comment type="similarity">
    <text evidence="4">Belongs to the CSN8 family.</text>
</comment>
<reference key="1">
    <citation type="journal article" date="2004" name="Genome Res.">
        <title>The status, quality, and expansion of the NIH full-length cDNA project: the Mammalian Gene Collection (MGC).</title>
        <authorList>
            <consortium name="The MGC Project Team"/>
        </authorList>
    </citation>
    <scope>NUCLEOTIDE SEQUENCE [LARGE SCALE MRNA]</scope>
    <source>
        <tissue>Pituitary</tissue>
    </source>
</reference>
<keyword id="KW-0963">Cytoplasm</keyword>
<keyword id="KW-0539">Nucleus</keyword>
<keyword id="KW-0597">Phosphoprotein</keyword>
<keyword id="KW-1185">Reference proteome</keyword>
<keyword id="KW-0736">Signalosome</keyword>
<protein>
    <recommendedName>
        <fullName>COP9 signalosome complex subunit 8</fullName>
        <shortName>SGN8</shortName>
        <shortName>Signalosome subunit 8</shortName>
    </recommendedName>
    <alternativeName>
        <fullName>COP9 homolog</fullName>
    </alternativeName>
    <alternativeName>
        <fullName>JAB1-containing signalosome subunit 8</fullName>
    </alternativeName>
</protein>
<proteinExistence type="evidence at transcript level"/>
<evidence type="ECO:0000250" key="1"/>
<evidence type="ECO:0000250" key="2">
    <source>
        <dbReference type="UniProtKB" id="Q99627"/>
    </source>
</evidence>
<evidence type="ECO:0000255" key="3">
    <source>
        <dbReference type="PROSITE-ProRule" id="PRU01185"/>
    </source>
</evidence>
<evidence type="ECO:0000305" key="4"/>
<accession>Q6P4Z9</accession>
<sequence>MPVAVMADNAFSFRKLLDQCENQELEAPGGIATPPVYGQLLALYLLQNDMNNARYLWKRIPPAIKSANSELGGIWSVGQRIWQRDFPGIYTTINAHQWSETVQPIMEALRDATRRRAFALVSQAYTSIIADDFAAFVGLPVEEAVKGVLEQGWQADSTTRMVLPRKPAPGALDVSLNRFIPLSEPAPVPPIPNEQQLARLTDYVAFLEN</sequence>
<feature type="chain" id="PRO_0000121010" description="COP9 signalosome complex subunit 8">
    <location>
        <begin position="1"/>
        <end position="209"/>
    </location>
</feature>
<feature type="domain" description="PCI" evidence="3">
    <location>
        <begin position="8"/>
        <end position="179"/>
    </location>
</feature>
<feature type="modified residue" description="Phosphoserine" evidence="2">
    <location>
        <position position="175"/>
    </location>
</feature>
<name>CSN8_RAT</name>
<gene>
    <name type="primary">Cops8</name>
    <name type="synonym">Csn8</name>
</gene>